<keyword id="KW-0131">Cell cycle</keyword>
<keyword id="KW-0132">Cell division</keyword>
<keyword id="KW-0133">Cell shape</keyword>
<keyword id="KW-0175">Coiled coil</keyword>
<keyword id="KW-0963">Cytoplasm</keyword>
<reference key="1">
    <citation type="journal article" date="2011" name="Microbiology">
        <title>The genome sequence of Bacillus subtilis subsp. spizizenii W23: insights into speciation within the B. subtilis complex and into the history of B. subtilis genetics.</title>
        <authorList>
            <person name="Zeigler D.R."/>
        </authorList>
    </citation>
    <scope>NUCLEOTIDE SEQUENCE [LARGE SCALE GENOMIC DNA]</scope>
    <source>
        <strain>ATCC 23059 / NRRL B-14472 / W23</strain>
    </source>
</reference>
<reference key="2">
    <citation type="submission" date="2006-12" db="EMBL/GenBank/DDBJ databases">
        <title>Reconstructing the early history of Bacillus subtilis genetics through comparative genomics.</title>
        <authorList>
            <person name="Zeigler D.R."/>
        </authorList>
    </citation>
    <scope>NUCLEOTIDE SEQUENCE [GENOMIC DNA] OF 68-98</scope>
    <source>
        <strain>ATCC 23059 / NRRL B-14472 / W23</strain>
        <strain>W23SR</strain>
    </source>
</reference>
<dbReference type="EMBL" id="CP002183">
    <property type="protein sequence ID" value="ADM38214.1"/>
    <property type="molecule type" value="Genomic_DNA"/>
</dbReference>
<dbReference type="EMBL" id="EF191445">
    <property type="protein sequence ID" value="ABN11507.1"/>
    <property type="molecule type" value="Genomic_DNA"/>
</dbReference>
<dbReference type="EMBL" id="EF191446">
    <property type="protein sequence ID" value="ABN11508.1"/>
    <property type="molecule type" value="Genomic_DNA"/>
</dbReference>
<dbReference type="RefSeq" id="WP_003225629.1">
    <property type="nucleotide sequence ID" value="NZ_CP148102.1"/>
</dbReference>
<dbReference type="SMR" id="E0U0L7"/>
<dbReference type="GeneID" id="86873244"/>
<dbReference type="KEGG" id="bss:BSUW23_10870"/>
<dbReference type="HOGENOM" id="CLU_140309_1_0_9"/>
<dbReference type="Proteomes" id="UP000002233">
    <property type="component" value="Chromosome"/>
</dbReference>
<dbReference type="GO" id="GO:0005737">
    <property type="term" value="C:cytoplasm"/>
    <property type="evidence" value="ECO:0007669"/>
    <property type="project" value="UniProtKB-SubCell"/>
</dbReference>
<dbReference type="GO" id="GO:0051301">
    <property type="term" value="P:cell division"/>
    <property type="evidence" value="ECO:0007669"/>
    <property type="project" value="UniProtKB-UniRule"/>
</dbReference>
<dbReference type="GO" id="GO:0008360">
    <property type="term" value="P:regulation of cell shape"/>
    <property type="evidence" value="ECO:0007669"/>
    <property type="project" value="UniProtKB-UniRule"/>
</dbReference>
<dbReference type="Gene3D" id="6.10.250.660">
    <property type="match status" value="1"/>
</dbReference>
<dbReference type="HAMAP" id="MF_02011">
    <property type="entry name" value="GpsB"/>
    <property type="match status" value="1"/>
</dbReference>
<dbReference type="InterPro" id="IPR011229">
    <property type="entry name" value="Cell_cycle_GpsB"/>
</dbReference>
<dbReference type="InterPro" id="IPR019933">
    <property type="entry name" value="DivIVA_domain"/>
</dbReference>
<dbReference type="InterPro" id="IPR007793">
    <property type="entry name" value="DivIVA_fam"/>
</dbReference>
<dbReference type="NCBIfam" id="TIGR03544">
    <property type="entry name" value="DivI1A_domain"/>
    <property type="match status" value="1"/>
</dbReference>
<dbReference type="NCBIfam" id="NF010725">
    <property type="entry name" value="PRK14127.1"/>
    <property type="match status" value="1"/>
</dbReference>
<dbReference type="PANTHER" id="PTHR35794:SF1">
    <property type="entry name" value="CELL CYCLE PROTEIN GPSB"/>
    <property type="match status" value="1"/>
</dbReference>
<dbReference type="PANTHER" id="PTHR35794">
    <property type="entry name" value="CELL DIVISION PROTEIN DIVIVA"/>
    <property type="match status" value="1"/>
</dbReference>
<dbReference type="Pfam" id="PF05103">
    <property type="entry name" value="DivIVA"/>
    <property type="match status" value="1"/>
</dbReference>
<dbReference type="PIRSF" id="PIRSF029938">
    <property type="entry name" value="UCP029938"/>
    <property type="match status" value="1"/>
</dbReference>
<sequence>MLADKVKLSAKEILEKEFKTGVRGYKQEDVDKFLDMIIKDYETFHQEIEELQQENLQLKKQLEEASKKQPVQSNTTNFDILKRLSNLEKHVFGSKLYD</sequence>
<feature type="chain" id="PRO_0000403659" description="Cell cycle protein GpsB">
    <location>
        <begin position="1"/>
        <end position="98"/>
    </location>
</feature>
<feature type="coiled-coil region" evidence="1">
    <location>
        <begin position="34"/>
        <end position="71"/>
    </location>
</feature>
<organism>
    <name type="scientific">Bacillus spizizenii (strain ATCC 23059 / NRRL B-14472 / W23)</name>
    <name type="common">Bacillus subtilis subsp. spizizenii</name>
    <dbReference type="NCBI Taxonomy" id="655816"/>
    <lineage>
        <taxon>Bacteria</taxon>
        <taxon>Bacillati</taxon>
        <taxon>Bacillota</taxon>
        <taxon>Bacilli</taxon>
        <taxon>Bacillales</taxon>
        <taxon>Bacillaceae</taxon>
        <taxon>Bacillus</taxon>
    </lineage>
</organism>
<evidence type="ECO:0000250" key="1"/>
<evidence type="ECO:0000305" key="2"/>
<gene>
    <name type="primary">gpsB</name>
    <name type="ordered locus">BSUW23_10870</name>
</gene>
<protein>
    <recommendedName>
        <fullName>Cell cycle protein GpsB</fullName>
    </recommendedName>
    <alternativeName>
        <fullName>Guiding PBP1-shuttling protein</fullName>
    </alternativeName>
</protein>
<comment type="function">
    <text evidence="1">Divisome component that associates with the complex late in its assembly, after the Z-ring is formed, and is dependent on DivIC and PBP2B for its recruitment to the divisome. Together with EzrA, is a key component of the system that regulates PBP1 localization during cell cycle progression. Its main role could be the removal of PBP1 from the cell pole after pole maturation is completed. Also contributes to the recruitment of PBP1 to the division complex. Not essential for septum formation (By similarity).</text>
</comment>
<comment type="subunit">
    <text evidence="1">Forms polymers through the coiled coil domains. Interacts with PBP1, MreC and EzrA (By similarity).</text>
</comment>
<comment type="subcellular location">
    <subcellularLocation>
        <location evidence="1">Cytoplasm</location>
    </subcellularLocation>
    <text evidence="1">Shuttles between the lateral wall and the division site in a cell cycle-dependent manner.</text>
</comment>
<comment type="similarity">
    <text evidence="2">Belongs to the GpsB family.</text>
</comment>
<name>GPSB_BACSH</name>
<proteinExistence type="inferred from homology"/>
<accession>E0U0L7</accession>
<accession>A3F2S7</accession>
<accession>P50839</accession>